<name>SPRN_XENTR</name>
<feature type="signal peptide" evidence="2">
    <location>
        <begin position="1"/>
        <end position="24"/>
    </location>
</feature>
<feature type="chain" id="PRO_0000320177" description="Shadow of prion protein">
    <location>
        <begin position="25"/>
        <end position="108"/>
    </location>
</feature>
<feature type="propeptide" id="PRO_0000320178" description="Removed in mature form" evidence="2">
    <location>
        <begin position="109"/>
        <end position="146"/>
    </location>
</feature>
<feature type="lipid moiety-binding region" description="GPI-anchor amidated serine" evidence="2">
    <location>
        <position position="108"/>
    </location>
</feature>
<feature type="glycosylation site" description="N-linked (GlcNAc...) asparagine" evidence="2">
    <location>
        <position position="94"/>
    </location>
</feature>
<organism>
    <name type="scientific">Xenopus tropicalis</name>
    <name type="common">Western clawed frog</name>
    <name type="synonym">Silurana tropicalis</name>
    <dbReference type="NCBI Taxonomy" id="8364"/>
    <lineage>
        <taxon>Eukaryota</taxon>
        <taxon>Metazoa</taxon>
        <taxon>Chordata</taxon>
        <taxon>Craniata</taxon>
        <taxon>Vertebrata</taxon>
        <taxon>Euteleostomi</taxon>
        <taxon>Amphibia</taxon>
        <taxon>Batrachia</taxon>
        <taxon>Anura</taxon>
        <taxon>Pipoidea</taxon>
        <taxon>Pipidae</taxon>
        <taxon>Xenopodinae</taxon>
        <taxon>Xenopus</taxon>
        <taxon>Silurana</taxon>
    </lineage>
</organism>
<protein>
    <recommendedName>
        <fullName>Shadow of prion protein</fullName>
        <shortName>Protein shadoo</shortName>
    </recommendedName>
</protein>
<reference key="1">
    <citation type="submission" date="2005-02" db="EMBL/GenBank/DDBJ databases">
        <authorList>
            <consortium name="NIH - Xenopus Gene Collection (XGC) project"/>
        </authorList>
    </citation>
    <scope>NUCLEOTIDE SEQUENCE [LARGE SCALE MRNA]</scope>
</reference>
<reference key="2">
    <citation type="journal article" date="2007" name="BMC Genomics">
        <title>Comparative genomic analysis of prion genes.</title>
        <authorList>
            <person name="Premzl M."/>
            <person name="Gamulin V."/>
        </authorList>
    </citation>
    <scope>IDENTIFICATION</scope>
</reference>
<keyword id="KW-0034">Amyloid</keyword>
<keyword id="KW-1003">Cell membrane</keyword>
<keyword id="KW-0325">Glycoprotein</keyword>
<keyword id="KW-0336">GPI-anchor</keyword>
<keyword id="KW-0449">Lipoprotein</keyword>
<keyword id="KW-0472">Membrane</keyword>
<keyword id="KW-0640">Prion</keyword>
<keyword id="KW-1185">Reference proteome</keyword>
<keyword id="KW-0732">Signal</keyword>
<accession>A2BDG5</accession>
<gene>
    <name type="primary">sprn</name>
</gene>
<sequence length="146" mass="15246">MRGTSAVCWSLLLLIALLSQNVTAKGGRGGARGGARGASRGASRVRLKTSSRYGSLRVASQAAAAGAAARAAARLSENTWRNNDHSGMDTQFGNSTNEGMYSYRAWTSGTCPLSSHLSFRLIISIGAILTCSSSSIYVSTKINLGK</sequence>
<proteinExistence type="evidence at transcript level"/>
<evidence type="ECO:0000250" key="1"/>
<evidence type="ECO:0000255" key="2"/>
<evidence type="ECO:0000305" key="3"/>
<dbReference type="EMBL" id="CX836955">
    <property type="status" value="NOT_ANNOTATED_CDS"/>
    <property type="molecule type" value="mRNA"/>
</dbReference>
<dbReference type="EMBL" id="BN000841">
    <property type="protein sequence ID" value="CAJ43801.1"/>
    <property type="molecule type" value="Genomic_DNA"/>
</dbReference>
<dbReference type="STRING" id="8364.ENSXETP00000035894"/>
<dbReference type="GlyCosmos" id="A2BDG5">
    <property type="glycosylation" value="1 site, No reported glycans"/>
</dbReference>
<dbReference type="PaxDb" id="8364-ENSXETP00000060337"/>
<dbReference type="HOGENOM" id="CLU_1776846_0_0_1"/>
<dbReference type="InParanoid" id="A2BDG5"/>
<dbReference type="Proteomes" id="UP000008143">
    <property type="component" value="Unplaced"/>
</dbReference>
<dbReference type="Bgee" id="ENSXETG00000022149">
    <property type="expression patterns" value="Expressed in heart and 10 other cell types or tissues"/>
</dbReference>
<dbReference type="GO" id="GO:0005886">
    <property type="term" value="C:plasma membrane"/>
    <property type="evidence" value="ECO:0007669"/>
    <property type="project" value="UniProtKB-SubCell"/>
</dbReference>
<dbReference type="GO" id="GO:0098552">
    <property type="term" value="C:side of membrane"/>
    <property type="evidence" value="ECO:0007669"/>
    <property type="project" value="UniProtKB-KW"/>
</dbReference>
<dbReference type="InterPro" id="IPR029238">
    <property type="entry name" value="Shadoo"/>
</dbReference>
<dbReference type="PANTHER" id="PTHR28552">
    <property type="entry name" value="SHADOW OF PRION PROTEIN"/>
    <property type="match status" value="1"/>
</dbReference>
<dbReference type="PANTHER" id="PTHR28552:SF1">
    <property type="entry name" value="SHADOW OF PRION PROTEIN"/>
    <property type="match status" value="1"/>
</dbReference>
<dbReference type="Pfam" id="PF14999">
    <property type="entry name" value="Shadoo"/>
    <property type="match status" value="1"/>
</dbReference>
<comment type="function">
    <text evidence="1">Prion-like protein that has PrP(C)-like neuroprotective activity.</text>
</comment>
<comment type="subcellular location">
    <subcellularLocation>
        <location evidence="1">Cell membrane</location>
        <topology evidence="1">Lipid-anchor</topology>
        <topology evidence="1">GPI-anchor</topology>
    </subcellularLocation>
</comment>
<comment type="similarity">
    <text evidence="3">Belongs to the SPRN family.</text>
</comment>